<keyword id="KW-0067">ATP-binding</keyword>
<keyword id="KW-0131">Cell cycle</keyword>
<keyword id="KW-0132">Cell division</keyword>
<keyword id="KW-0133">Cell shape</keyword>
<keyword id="KW-0961">Cell wall biogenesis/degradation</keyword>
<keyword id="KW-0963">Cytoplasm</keyword>
<keyword id="KW-0436">Ligase</keyword>
<keyword id="KW-0547">Nucleotide-binding</keyword>
<keyword id="KW-0573">Peptidoglycan synthesis</keyword>
<keyword id="KW-1185">Reference proteome</keyword>
<sequence>MALSLRACILLLKEHHLLKSAAIQNTEDVDMTGIAYDSRKVSGPTLFFCKGDKFRPIYLSMAKDNGARTYVAEKPYVEGNGLNALIVRNITKAMAILSAAFFDYPQDDLFVIAYTGTKGKTTASYFTEAILNEARPRHIALFSTIDTVVGPEPDQRFKSNLTTPESLDLFRDMREAVENGMTHLVMEVSSQAYLRNRVFGLTYDVGFFLNITPDHIGPNEHPTFANYLHNKLQLLVNARKVVINAETEHFDQVYAAATTTTYPESIYLFASAGFRPKRDDIDIDFRFDSQEADVAESRFTLVPVTEKAAALNIGGHYSLALIGDFNESNATAAIIGAGLAGVDASAAVPGIAKVKIPGRMEHTKVAGHGAVYVDYAHNYASMKALLSFLKHAYKDPRLLVVVGSPGDKGVSRRPGFAKVLTEFATEAFLTTDDPGYEDPANIIEEIDSKIDHSKVKVHKVLDRKKAIAEAISDSGPNDIVVVAGKGADPYQKVRGVNTPWPTDMAVVKQVAKSLQEG</sequence>
<reference key="1">
    <citation type="journal article" date="2006" name="Proc. Natl. Acad. Sci. U.S.A.">
        <title>Comparative genomics of the lactic acid bacteria.</title>
        <authorList>
            <person name="Makarova K.S."/>
            <person name="Slesarev A."/>
            <person name="Wolf Y.I."/>
            <person name="Sorokin A."/>
            <person name="Mirkin B."/>
            <person name="Koonin E.V."/>
            <person name="Pavlov A."/>
            <person name="Pavlova N."/>
            <person name="Karamychev V."/>
            <person name="Polouchine N."/>
            <person name="Shakhova V."/>
            <person name="Grigoriev I."/>
            <person name="Lou Y."/>
            <person name="Rohksar D."/>
            <person name="Lucas S."/>
            <person name="Huang K."/>
            <person name="Goodstein D.M."/>
            <person name="Hawkins T."/>
            <person name="Plengvidhya V."/>
            <person name="Welker D."/>
            <person name="Hughes J."/>
            <person name="Goh Y."/>
            <person name="Benson A."/>
            <person name="Baldwin K."/>
            <person name="Lee J.-H."/>
            <person name="Diaz-Muniz I."/>
            <person name="Dosti B."/>
            <person name="Smeianov V."/>
            <person name="Wechter W."/>
            <person name="Barabote R."/>
            <person name="Lorca G."/>
            <person name="Altermann E."/>
            <person name="Barrangou R."/>
            <person name="Ganesan B."/>
            <person name="Xie Y."/>
            <person name="Rawsthorne H."/>
            <person name="Tamir D."/>
            <person name="Parker C."/>
            <person name="Breidt F."/>
            <person name="Broadbent J.R."/>
            <person name="Hutkins R."/>
            <person name="O'Sullivan D."/>
            <person name="Steele J."/>
            <person name="Unlu G."/>
            <person name="Saier M.H. Jr."/>
            <person name="Klaenhammer T."/>
            <person name="Richardson P."/>
            <person name="Kozyavkin S."/>
            <person name="Weimer B.C."/>
            <person name="Mills D.A."/>
        </authorList>
    </citation>
    <scope>NUCLEOTIDE SEQUENCE [LARGE SCALE GENOMIC DNA]</scope>
    <source>
        <strain>ATCC 334 / BCRC 17002 / CCUG 31169 / CIP 107868 / KCTC 3260 / NRRL B-441</strain>
    </source>
</reference>
<accession>Q03CI6</accession>
<evidence type="ECO:0000255" key="1">
    <source>
        <dbReference type="HAMAP-Rule" id="MF_00208"/>
    </source>
</evidence>
<dbReference type="EC" id="6.3.2.-" evidence="1"/>
<dbReference type="EMBL" id="CP000423">
    <property type="protein sequence ID" value="ABJ69086.1"/>
    <property type="molecule type" value="Genomic_DNA"/>
</dbReference>
<dbReference type="RefSeq" id="WP_003592802.1">
    <property type="nucleotide sequence ID" value="NC_008526.1"/>
</dbReference>
<dbReference type="RefSeq" id="YP_805528.1">
    <property type="nucleotide sequence ID" value="NC_008526.1"/>
</dbReference>
<dbReference type="SMR" id="Q03CI6"/>
<dbReference type="STRING" id="321967.LSEI_0223"/>
<dbReference type="PaxDb" id="321967-LSEI_0223"/>
<dbReference type="DNASU" id="4419225"/>
<dbReference type="KEGG" id="lca:LSEI_0223"/>
<dbReference type="PATRIC" id="fig|321967.11.peg.249"/>
<dbReference type="HOGENOM" id="CLU_022291_4_2_9"/>
<dbReference type="UniPathway" id="UPA00219"/>
<dbReference type="Proteomes" id="UP000001651">
    <property type="component" value="Chromosome"/>
</dbReference>
<dbReference type="GO" id="GO:0005737">
    <property type="term" value="C:cytoplasm"/>
    <property type="evidence" value="ECO:0007669"/>
    <property type="project" value="UniProtKB-SubCell"/>
</dbReference>
<dbReference type="GO" id="GO:0016881">
    <property type="term" value="F:acid-amino acid ligase activity"/>
    <property type="evidence" value="ECO:0007669"/>
    <property type="project" value="UniProtKB-UniRule"/>
</dbReference>
<dbReference type="GO" id="GO:0005524">
    <property type="term" value="F:ATP binding"/>
    <property type="evidence" value="ECO:0007669"/>
    <property type="project" value="UniProtKB-UniRule"/>
</dbReference>
<dbReference type="GO" id="GO:0000287">
    <property type="term" value="F:magnesium ion binding"/>
    <property type="evidence" value="ECO:0007669"/>
    <property type="project" value="UniProtKB-UniRule"/>
</dbReference>
<dbReference type="GO" id="GO:0051301">
    <property type="term" value="P:cell division"/>
    <property type="evidence" value="ECO:0007669"/>
    <property type="project" value="UniProtKB-KW"/>
</dbReference>
<dbReference type="GO" id="GO:0071555">
    <property type="term" value="P:cell wall organization"/>
    <property type="evidence" value="ECO:0007669"/>
    <property type="project" value="UniProtKB-KW"/>
</dbReference>
<dbReference type="GO" id="GO:0009252">
    <property type="term" value="P:peptidoglycan biosynthetic process"/>
    <property type="evidence" value="ECO:0007669"/>
    <property type="project" value="UniProtKB-UniRule"/>
</dbReference>
<dbReference type="GO" id="GO:0008360">
    <property type="term" value="P:regulation of cell shape"/>
    <property type="evidence" value="ECO:0007669"/>
    <property type="project" value="UniProtKB-KW"/>
</dbReference>
<dbReference type="Gene3D" id="3.90.190.20">
    <property type="entry name" value="Mur ligase, C-terminal domain"/>
    <property type="match status" value="1"/>
</dbReference>
<dbReference type="Gene3D" id="3.40.1190.10">
    <property type="entry name" value="Mur-like, catalytic domain"/>
    <property type="match status" value="1"/>
</dbReference>
<dbReference type="Gene3D" id="3.40.1390.10">
    <property type="entry name" value="MurE/MurF, N-terminal domain"/>
    <property type="match status" value="1"/>
</dbReference>
<dbReference type="HAMAP" id="MF_00208">
    <property type="entry name" value="MurE"/>
    <property type="match status" value="1"/>
</dbReference>
<dbReference type="InterPro" id="IPR036565">
    <property type="entry name" value="Mur-like_cat_sf"/>
</dbReference>
<dbReference type="InterPro" id="IPR004101">
    <property type="entry name" value="Mur_ligase_C"/>
</dbReference>
<dbReference type="InterPro" id="IPR036615">
    <property type="entry name" value="Mur_ligase_C_dom_sf"/>
</dbReference>
<dbReference type="InterPro" id="IPR013221">
    <property type="entry name" value="Mur_ligase_cen"/>
</dbReference>
<dbReference type="InterPro" id="IPR035911">
    <property type="entry name" value="MurE/MurF_N"/>
</dbReference>
<dbReference type="InterPro" id="IPR005761">
    <property type="entry name" value="UDP-N-AcMur-Glu-dNH2Pim_ligase"/>
</dbReference>
<dbReference type="NCBIfam" id="TIGR01085">
    <property type="entry name" value="murE"/>
    <property type="match status" value="1"/>
</dbReference>
<dbReference type="NCBIfam" id="NF001130">
    <property type="entry name" value="PRK00139.2-4"/>
    <property type="match status" value="1"/>
</dbReference>
<dbReference type="PANTHER" id="PTHR23135">
    <property type="entry name" value="MUR LIGASE FAMILY MEMBER"/>
    <property type="match status" value="1"/>
</dbReference>
<dbReference type="PANTHER" id="PTHR23135:SF4">
    <property type="entry name" value="UDP-N-ACETYLMURAMOYL-L-ALANYL-D-GLUTAMATE--2,6-DIAMINOPIMELATE LIGASE MURE HOMOLOG, CHLOROPLASTIC"/>
    <property type="match status" value="1"/>
</dbReference>
<dbReference type="Pfam" id="PF02875">
    <property type="entry name" value="Mur_ligase_C"/>
    <property type="match status" value="1"/>
</dbReference>
<dbReference type="Pfam" id="PF08245">
    <property type="entry name" value="Mur_ligase_M"/>
    <property type="match status" value="1"/>
</dbReference>
<dbReference type="SUPFAM" id="SSF53623">
    <property type="entry name" value="MurD-like peptide ligases, catalytic domain"/>
    <property type="match status" value="1"/>
</dbReference>
<dbReference type="SUPFAM" id="SSF53244">
    <property type="entry name" value="MurD-like peptide ligases, peptide-binding domain"/>
    <property type="match status" value="1"/>
</dbReference>
<dbReference type="SUPFAM" id="SSF63418">
    <property type="entry name" value="MurE/MurF N-terminal domain"/>
    <property type="match status" value="1"/>
</dbReference>
<organism>
    <name type="scientific">Lacticaseibacillus paracasei (strain ATCC 334 / BCRC 17002 / CCUG 31169 / CIP 107868 / KCTC 3260 / NRRL B-441)</name>
    <name type="common">Lactobacillus paracasei</name>
    <dbReference type="NCBI Taxonomy" id="321967"/>
    <lineage>
        <taxon>Bacteria</taxon>
        <taxon>Bacillati</taxon>
        <taxon>Bacillota</taxon>
        <taxon>Bacilli</taxon>
        <taxon>Lactobacillales</taxon>
        <taxon>Lactobacillaceae</taxon>
        <taxon>Lacticaseibacillus</taxon>
    </lineage>
</organism>
<protein>
    <recommendedName>
        <fullName evidence="1">UDP-N-acetylmuramyl-tripeptide synthetase</fullName>
        <ecNumber evidence="1">6.3.2.-</ecNumber>
    </recommendedName>
    <alternativeName>
        <fullName evidence="1">UDP-MurNAc-tripeptide synthetase</fullName>
    </alternativeName>
</protein>
<comment type="function">
    <text evidence="1">Catalyzes the addition of an amino acid to the nucleotide precursor UDP-N-acetylmuramoyl-L-alanyl-D-glutamate (UMAG) in the biosynthesis of bacterial cell-wall peptidoglycan.</text>
</comment>
<comment type="pathway">
    <text evidence="1">Cell wall biogenesis; peptidoglycan biosynthesis.</text>
</comment>
<comment type="subcellular location">
    <subcellularLocation>
        <location evidence="1">Cytoplasm</location>
    </subcellularLocation>
</comment>
<comment type="PTM">
    <text evidence="1">Carboxylation is probably crucial for Mg(2+) binding and, consequently, for the gamma-phosphate positioning of ATP.</text>
</comment>
<comment type="similarity">
    <text evidence="1">Belongs to the MurCDEF family. MurE subfamily.</text>
</comment>
<gene>
    <name evidence="1" type="primary">murE</name>
    <name type="ordered locus">LSEI_0223</name>
</gene>
<feature type="chain" id="PRO_1000012362" description="UDP-N-acetylmuramyl-tripeptide synthetase">
    <location>
        <begin position="1"/>
        <end position="517"/>
    </location>
</feature>
<feature type="binding site" evidence="1">
    <location>
        <position position="38"/>
    </location>
    <ligand>
        <name>UDP-N-acetyl-alpha-D-muramoyl-L-alanyl-D-glutamate</name>
        <dbReference type="ChEBI" id="CHEBI:83900"/>
    </ligand>
</feature>
<feature type="binding site" evidence="1">
    <location>
        <begin position="116"/>
        <end position="122"/>
    </location>
    <ligand>
        <name>ATP</name>
        <dbReference type="ChEBI" id="CHEBI:30616"/>
    </ligand>
</feature>
<feature type="binding site" evidence="1">
    <location>
        <position position="160"/>
    </location>
    <ligand>
        <name>UDP-N-acetyl-alpha-D-muramoyl-L-alanyl-D-glutamate</name>
        <dbReference type="ChEBI" id="CHEBI:83900"/>
    </ligand>
</feature>
<feature type="binding site" evidence="1">
    <location>
        <begin position="162"/>
        <end position="163"/>
    </location>
    <ligand>
        <name>UDP-N-acetyl-alpha-D-muramoyl-L-alanyl-D-glutamate</name>
        <dbReference type="ChEBI" id="CHEBI:83900"/>
    </ligand>
</feature>
<feature type="binding site" evidence="1">
    <location>
        <position position="189"/>
    </location>
    <ligand>
        <name>UDP-N-acetyl-alpha-D-muramoyl-L-alanyl-D-glutamate</name>
        <dbReference type="ChEBI" id="CHEBI:83900"/>
    </ligand>
</feature>
<feature type="binding site" evidence="1">
    <location>
        <position position="197"/>
    </location>
    <ligand>
        <name>UDP-N-acetyl-alpha-D-muramoyl-L-alanyl-D-glutamate</name>
        <dbReference type="ChEBI" id="CHEBI:83900"/>
    </ligand>
</feature>
<feature type="modified residue" description="N6-carboxylysine" evidence="1">
    <location>
        <position position="231"/>
    </location>
</feature>
<name>MURE_LACP3</name>
<proteinExistence type="inferred from homology"/>